<dbReference type="EC" id="3.6.1.11" evidence="2"/>
<dbReference type="EMBL" id="AF085682">
    <property type="protein sequence ID" value="AAC34891.1"/>
    <property type="molecule type" value="Genomic_DNA"/>
</dbReference>
<dbReference type="EMBL" id="AE006468">
    <property type="protein sequence ID" value="AAL21396.1"/>
    <property type="molecule type" value="Genomic_DNA"/>
</dbReference>
<dbReference type="RefSeq" id="NP_461437.1">
    <property type="nucleotide sequence ID" value="NC_003197.2"/>
</dbReference>
<dbReference type="RefSeq" id="WP_001123330.1">
    <property type="nucleotide sequence ID" value="NC_003197.2"/>
</dbReference>
<dbReference type="SMR" id="P0A269"/>
<dbReference type="STRING" id="99287.STM2502"/>
<dbReference type="PaxDb" id="99287-STM2502"/>
<dbReference type="GeneID" id="1254024"/>
<dbReference type="KEGG" id="stm:STM2502"/>
<dbReference type="PATRIC" id="fig|99287.12.peg.2641"/>
<dbReference type="HOGENOM" id="CLU_025908_4_0_6"/>
<dbReference type="OMA" id="RISEGCY"/>
<dbReference type="PhylomeDB" id="P0A269"/>
<dbReference type="BioCyc" id="SENT99287:STM2502-MONOMER"/>
<dbReference type="Proteomes" id="UP000001014">
    <property type="component" value="Chromosome"/>
</dbReference>
<dbReference type="GO" id="GO:0005886">
    <property type="term" value="C:plasma membrane"/>
    <property type="evidence" value="ECO:0007669"/>
    <property type="project" value="UniProtKB-SubCell"/>
</dbReference>
<dbReference type="GO" id="GO:0004309">
    <property type="term" value="F:exopolyphosphatase activity"/>
    <property type="evidence" value="ECO:0000318"/>
    <property type="project" value="GO_Central"/>
</dbReference>
<dbReference type="GO" id="GO:0006798">
    <property type="term" value="P:polyphosphate catabolic process"/>
    <property type="evidence" value="ECO:0000318"/>
    <property type="project" value="GO_Central"/>
</dbReference>
<dbReference type="CDD" id="cd24116">
    <property type="entry name" value="ASKHA_NBD_EcPPX-like"/>
    <property type="match status" value="1"/>
</dbReference>
<dbReference type="FunFam" id="1.10.3210.10:FF:000006">
    <property type="entry name" value="Exopolyphosphatase"/>
    <property type="match status" value="1"/>
</dbReference>
<dbReference type="FunFam" id="3.30.70.2260:FF:000001">
    <property type="entry name" value="Exopolyphosphatase"/>
    <property type="match status" value="1"/>
</dbReference>
<dbReference type="FunFam" id="3.30.420.150:FF:000001">
    <property type="entry name" value="Guanosine-5'-triphosphate,3'-diphosphate pyrophosphatase"/>
    <property type="match status" value="1"/>
</dbReference>
<dbReference type="FunFam" id="3.30.420.40:FF:000023">
    <property type="entry name" value="Guanosine-5'-triphosphate,3'-diphosphate pyrophosphatase"/>
    <property type="match status" value="1"/>
</dbReference>
<dbReference type="Gene3D" id="3.30.420.40">
    <property type="match status" value="1"/>
</dbReference>
<dbReference type="Gene3D" id="3.30.70.2260">
    <property type="match status" value="1"/>
</dbReference>
<dbReference type="Gene3D" id="3.30.420.150">
    <property type="entry name" value="Exopolyphosphatase. Domain 2"/>
    <property type="match status" value="1"/>
</dbReference>
<dbReference type="Gene3D" id="1.10.3210.10">
    <property type="entry name" value="Hypothetical protein af1432"/>
    <property type="match status" value="1"/>
</dbReference>
<dbReference type="InterPro" id="IPR043129">
    <property type="entry name" value="ATPase_NBD"/>
</dbReference>
<dbReference type="InterPro" id="IPR022371">
    <property type="entry name" value="Exopolyphosphatase"/>
</dbReference>
<dbReference type="InterPro" id="IPR050273">
    <property type="entry name" value="GppA/Ppx_hydrolase"/>
</dbReference>
<dbReference type="InterPro" id="IPR048950">
    <property type="entry name" value="Ppx_GppA_C"/>
</dbReference>
<dbReference type="InterPro" id="IPR003695">
    <property type="entry name" value="Ppx_GppA_N"/>
</dbReference>
<dbReference type="InterPro" id="IPR030673">
    <property type="entry name" value="PyroPPase_GppA_Ppx"/>
</dbReference>
<dbReference type="NCBIfam" id="TIGR03706">
    <property type="entry name" value="exo_poly_only"/>
    <property type="match status" value="1"/>
</dbReference>
<dbReference type="NCBIfam" id="NF008108">
    <property type="entry name" value="PRK10854.1"/>
    <property type="match status" value="1"/>
</dbReference>
<dbReference type="PANTHER" id="PTHR30005">
    <property type="entry name" value="EXOPOLYPHOSPHATASE"/>
    <property type="match status" value="1"/>
</dbReference>
<dbReference type="PANTHER" id="PTHR30005:SF14">
    <property type="entry name" value="EXOPOLYPHOSPHATASE"/>
    <property type="match status" value="1"/>
</dbReference>
<dbReference type="Pfam" id="PF02541">
    <property type="entry name" value="Ppx-GppA"/>
    <property type="match status" value="1"/>
</dbReference>
<dbReference type="Pfam" id="PF21447">
    <property type="entry name" value="Ppx-GppA_III"/>
    <property type="match status" value="1"/>
</dbReference>
<dbReference type="PIRSF" id="PIRSF001267">
    <property type="entry name" value="Pyrophosphatase_GppA_Ppx"/>
    <property type="match status" value="1"/>
</dbReference>
<dbReference type="SUPFAM" id="SSF53067">
    <property type="entry name" value="Actin-like ATPase domain"/>
    <property type="match status" value="2"/>
</dbReference>
<dbReference type="SUPFAM" id="SSF109604">
    <property type="entry name" value="HD-domain/PDEase-like"/>
    <property type="match status" value="1"/>
</dbReference>
<reference key="1">
    <citation type="submission" date="1998-08" db="EMBL/GenBank/DDBJ databases">
        <title>Polyphosphate kinase (ppk) and exopolyphosphatase (ppx) genes in Salmonella typhimurium.</title>
        <authorList>
            <person name="Kim K.S."/>
            <person name="Fraley C.D."/>
            <person name="Kornberg A."/>
        </authorList>
    </citation>
    <scope>NUCLEOTIDE SEQUENCE [GENOMIC DNA]</scope>
    <source>
        <strain>WRAY</strain>
    </source>
</reference>
<reference key="2">
    <citation type="journal article" date="2001" name="Nature">
        <title>Complete genome sequence of Salmonella enterica serovar Typhimurium LT2.</title>
        <authorList>
            <person name="McClelland M."/>
            <person name="Sanderson K.E."/>
            <person name="Spieth J."/>
            <person name="Clifton S.W."/>
            <person name="Latreille P."/>
            <person name="Courtney L."/>
            <person name="Porwollik S."/>
            <person name="Ali J."/>
            <person name="Dante M."/>
            <person name="Du F."/>
            <person name="Hou S."/>
            <person name="Layman D."/>
            <person name="Leonard S."/>
            <person name="Nguyen C."/>
            <person name="Scott K."/>
            <person name="Holmes A."/>
            <person name="Grewal N."/>
            <person name="Mulvaney E."/>
            <person name="Ryan E."/>
            <person name="Sun H."/>
            <person name="Florea L."/>
            <person name="Miller W."/>
            <person name="Stoneking T."/>
            <person name="Nhan M."/>
            <person name="Waterston R."/>
            <person name="Wilson R.K."/>
        </authorList>
    </citation>
    <scope>NUCLEOTIDE SEQUENCE [LARGE SCALE GENOMIC DNA]</scope>
    <source>
        <strain>LT2 / SGSC1412 / ATCC 700720</strain>
    </source>
</reference>
<comment type="function">
    <text evidence="2">Degradation of inorganic polyphosphates (polyP). Releases orthophosphate processively from the ends of the polyP chain.</text>
</comment>
<comment type="catalytic activity">
    <reaction evidence="2">
        <text>[phosphate](n) + H2O = [phosphate](n-1) + phosphate + H(+)</text>
        <dbReference type="Rhea" id="RHEA:21528"/>
        <dbReference type="Rhea" id="RHEA-COMP:9859"/>
        <dbReference type="Rhea" id="RHEA-COMP:14279"/>
        <dbReference type="ChEBI" id="CHEBI:15377"/>
        <dbReference type="ChEBI" id="CHEBI:15378"/>
        <dbReference type="ChEBI" id="CHEBI:16838"/>
        <dbReference type="ChEBI" id="CHEBI:43474"/>
        <dbReference type="EC" id="3.6.1.11"/>
    </reaction>
</comment>
<comment type="cofactor">
    <cofactor evidence="2">
        <name>Mg(2+)</name>
        <dbReference type="ChEBI" id="CHEBI:18420"/>
    </cofactor>
</comment>
<comment type="subunit">
    <text evidence="2">Homodimer.</text>
</comment>
<comment type="subcellular location">
    <subcellularLocation>
        <location evidence="2">Cell membrane</location>
        <topology evidence="2">Peripheral membrane protein</topology>
    </subcellularLocation>
</comment>
<comment type="similarity">
    <text evidence="3">Belongs to the GppA/Ppx family.</text>
</comment>
<sequence length="513" mass="58145">MPIYDKSPRPQEFAAVDLGSNSFHMVIARVVDGAMQIIGRLKQRVHLADGLGADNKLSEEAMERGLSCLSLFAERLQGFSPSSVCIVGTHTLRQAQNAADFLKRAEKVIPYPIEIISGNEEARLIFMGVEHTQPEKGRKLVIDIGGGSTELVIGENFEPRLVESRRMGCVSFAQLYFPGGVINKENFQRARMAAAQKLETLTWQYRIQGWNVAMGASGTIKAAHEVLLALGEKDGFITPERLDKLKSEVLKHRSFNALSLPGLSEERKAVFVPGLAILCGVFDALAIRELRLSDGALREGVLYEMEGRFRHQDVRSRTAKSLANQYNIDREQARRVLETTMQMYEQWQAQQPKLAHPQLEALLRWAAMLHEVGLNINHSGLHRHSAYILQHSDLPGFNQEQQMMMATLVRYHRKAIKLDDMPRFTLFKKKQYLPLIQLLRLGVLLNNQRQATTTPPTLRLTTDDSHWTLCFPHDWFSQNALVLLDLEKEQQYWEAVTGWRLNIEEESSPEIAA</sequence>
<name>PPX_SALTY</name>
<gene>
    <name type="primary">ppx</name>
    <name type="ordered locus">STM2502</name>
</gene>
<organism>
    <name type="scientific">Salmonella typhimurium (strain LT2 / SGSC1412 / ATCC 700720)</name>
    <dbReference type="NCBI Taxonomy" id="99287"/>
    <lineage>
        <taxon>Bacteria</taxon>
        <taxon>Pseudomonadati</taxon>
        <taxon>Pseudomonadota</taxon>
        <taxon>Gammaproteobacteria</taxon>
        <taxon>Enterobacterales</taxon>
        <taxon>Enterobacteriaceae</taxon>
        <taxon>Salmonella</taxon>
    </lineage>
</organism>
<protein>
    <recommendedName>
        <fullName evidence="2">Exopolyphosphatase</fullName>
        <shortName evidence="2">ExopolyPase</shortName>
        <ecNumber evidence="2">3.6.1.11</ecNumber>
    </recommendedName>
</protein>
<evidence type="ECO:0000250" key="1"/>
<evidence type="ECO:0000250" key="2">
    <source>
        <dbReference type="UniProtKB" id="P0AFL6"/>
    </source>
</evidence>
<evidence type="ECO:0000305" key="3"/>
<proteinExistence type="inferred from homology"/>
<feature type="initiator methionine" description="Removed" evidence="1">
    <location>
        <position position="1"/>
    </location>
</feature>
<feature type="chain" id="PRO_0000194305" description="Exopolyphosphatase">
    <location>
        <begin position="2"/>
        <end position="513"/>
    </location>
</feature>
<keyword id="KW-1003">Cell membrane</keyword>
<keyword id="KW-0378">Hydrolase</keyword>
<keyword id="KW-0460">Magnesium</keyword>
<keyword id="KW-0472">Membrane</keyword>
<keyword id="KW-1185">Reference proteome</keyword>
<accession>P0A269</accession>
<accession>O86091</accession>